<gene>
    <name type="primary">Creb1</name>
    <name type="synonym">Creb-1</name>
</gene>
<proteinExistence type="evidence at protein level"/>
<dbReference type="EMBL" id="X67719">
    <property type="protein sequence ID" value="CAA47953.1"/>
    <property type="molecule type" value="Genomic_DNA"/>
</dbReference>
<dbReference type="EMBL" id="X67721">
    <property type="protein sequence ID" value="CAA47953.1"/>
    <property type="status" value="JOINED"/>
    <property type="molecule type" value="Genomic_DNA"/>
</dbReference>
<dbReference type="EMBL" id="X67724">
    <property type="protein sequence ID" value="CAA47953.1"/>
    <property type="status" value="JOINED"/>
    <property type="molecule type" value="Genomic_DNA"/>
</dbReference>
<dbReference type="EMBL" id="X67725">
    <property type="protein sequence ID" value="CAA47953.1"/>
    <property type="status" value="JOINED"/>
    <property type="molecule type" value="Genomic_DNA"/>
</dbReference>
<dbReference type="EMBL" id="X67726">
    <property type="protein sequence ID" value="CAA47953.1"/>
    <property type="status" value="JOINED"/>
    <property type="molecule type" value="Genomic_DNA"/>
</dbReference>
<dbReference type="EMBL" id="X67727">
    <property type="protein sequence ID" value="CAA47953.1"/>
    <property type="status" value="JOINED"/>
    <property type="molecule type" value="Genomic_DNA"/>
</dbReference>
<dbReference type="EMBL" id="X67728">
    <property type="protein sequence ID" value="CAA47953.1"/>
    <property type="status" value="JOINED"/>
    <property type="molecule type" value="Genomic_DNA"/>
</dbReference>
<dbReference type="EMBL" id="X67719">
    <property type="protein sequence ID" value="CAA47954.1"/>
    <property type="molecule type" value="Genomic_DNA"/>
</dbReference>
<dbReference type="EMBL" id="X67721">
    <property type="protein sequence ID" value="CAA47954.1"/>
    <property type="status" value="JOINED"/>
    <property type="molecule type" value="Genomic_DNA"/>
</dbReference>
<dbReference type="EMBL" id="X67722">
    <property type="protein sequence ID" value="CAA47954.1"/>
    <property type="status" value="JOINED"/>
    <property type="molecule type" value="Genomic_DNA"/>
</dbReference>
<dbReference type="EMBL" id="X67724">
    <property type="protein sequence ID" value="CAA47954.1"/>
    <property type="status" value="JOINED"/>
    <property type="molecule type" value="Genomic_DNA"/>
</dbReference>
<dbReference type="EMBL" id="X67725">
    <property type="protein sequence ID" value="CAA47954.1"/>
    <property type="status" value="JOINED"/>
    <property type="molecule type" value="Genomic_DNA"/>
</dbReference>
<dbReference type="EMBL" id="X67726">
    <property type="protein sequence ID" value="CAA47954.1"/>
    <property type="status" value="JOINED"/>
    <property type="molecule type" value="Genomic_DNA"/>
</dbReference>
<dbReference type="EMBL" id="X67727">
    <property type="protein sequence ID" value="CAA47954.1"/>
    <property type="status" value="JOINED"/>
    <property type="molecule type" value="Genomic_DNA"/>
</dbReference>
<dbReference type="EMBL" id="X67728">
    <property type="protein sequence ID" value="CAA47954.1"/>
    <property type="status" value="JOINED"/>
    <property type="molecule type" value="Genomic_DNA"/>
</dbReference>
<dbReference type="EMBL" id="M95106">
    <property type="protein sequence ID" value="AAA37456.1"/>
    <property type="molecule type" value="mRNA"/>
</dbReference>
<dbReference type="CCDS" id="CCDS15004.1">
    <molecule id="Q01147-1"/>
</dbReference>
<dbReference type="CCDS" id="CCDS15005.1">
    <molecule id="Q01147-2"/>
</dbReference>
<dbReference type="PIR" id="S20955">
    <property type="entry name" value="S20955"/>
</dbReference>
<dbReference type="PIR" id="S42699">
    <property type="entry name" value="S42699"/>
</dbReference>
<dbReference type="RefSeq" id="NP_034082.1">
    <molecule id="Q01147-1"/>
    <property type="nucleotide sequence ID" value="NM_009952.2"/>
</dbReference>
<dbReference type="RefSeq" id="NP_598589.2">
    <molecule id="Q01147-2"/>
    <property type="nucleotide sequence ID" value="NM_133828.2"/>
</dbReference>
<dbReference type="RefSeq" id="XP_006495713.1">
    <molecule id="Q01147-1"/>
    <property type="nucleotide sequence ID" value="XM_006495650.4"/>
</dbReference>
<dbReference type="RefSeq" id="XP_006495714.1">
    <molecule id="Q01147-2"/>
    <property type="nucleotide sequence ID" value="XM_006495651.5"/>
</dbReference>
<dbReference type="RefSeq" id="XP_017169569.1">
    <molecule id="Q01147-1"/>
    <property type="nucleotide sequence ID" value="XM_017314080.2"/>
</dbReference>
<dbReference type="RefSeq" id="XP_017169588.1">
    <molecule id="Q01147-2"/>
    <property type="nucleotide sequence ID" value="XM_017314099.2"/>
</dbReference>
<dbReference type="PDB" id="1DH3">
    <property type="method" value="X-ray"/>
    <property type="resolution" value="3.00 A"/>
    <property type="chains" value="A/C=271-325"/>
</dbReference>
<dbReference type="PDBsum" id="1DH3"/>
<dbReference type="BMRB" id="Q01147"/>
<dbReference type="SMR" id="Q01147"/>
<dbReference type="BioGRID" id="198873">
    <property type="interactions" value="29"/>
</dbReference>
<dbReference type="ComplexPortal" id="CPX-6">
    <property type="entry name" value="bZIP transcription factor complex, Atf4-Creb1"/>
</dbReference>
<dbReference type="CORUM" id="Q01147"/>
<dbReference type="FunCoup" id="Q01147">
    <property type="interactions" value="5692"/>
</dbReference>
<dbReference type="IntAct" id="Q01147">
    <property type="interactions" value="10"/>
</dbReference>
<dbReference type="MINT" id="Q01147"/>
<dbReference type="STRING" id="10090.ENSMUSP00000059973"/>
<dbReference type="GlyGen" id="Q01147">
    <property type="glycosylation" value="1 site, 1 O-linked glycan (1 site)"/>
</dbReference>
<dbReference type="iPTMnet" id="Q01147"/>
<dbReference type="PhosphoSitePlus" id="Q01147"/>
<dbReference type="jPOST" id="Q01147"/>
<dbReference type="PaxDb" id="10090-ENSMUSP00000140112"/>
<dbReference type="PeptideAtlas" id="Q01147"/>
<dbReference type="ProteomicsDB" id="284119">
    <molecule id="Q01147-2"/>
</dbReference>
<dbReference type="ProteomicsDB" id="284120">
    <molecule id="Q01147-2"/>
</dbReference>
<dbReference type="Pumba" id="Q01147"/>
<dbReference type="ABCD" id="Q01147">
    <property type="antibodies" value="1 sequenced antibody"/>
</dbReference>
<dbReference type="Antibodypedia" id="3536">
    <property type="antibodies" value="2200 antibodies from 53 providers"/>
</dbReference>
<dbReference type="DNASU" id="12912"/>
<dbReference type="Ensembl" id="ENSMUST00000049932.12">
    <molecule id="Q01147-1"/>
    <property type="protein sequence ID" value="ENSMUSP00000059973.6"/>
    <property type="gene ID" value="ENSMUSG00000025958.15"/>
</dbReference>
<dbReference type="Ensembl" id="ENSMUST00000087366.11">
    <molecule id="Q01147-2"/>
    <property type="protein sequence ID" value="ENSMUSP00000084624.5"/>
    <property type="gene ID" value="ENSMUSG00000025958.15"/>
</dbReference>
<dbReference type="Ensembl" id="ENSMUST00000185594.7">
    <molecule id="Q01147-2"/>
    <property type="protein sequence ID" value="ENSMUSP00000139995.2"/>
    <property type="gene ID" value="ENSMUSG00000025958.15"/>
</dbReference>
<dbReference type="Ensembl" id="ENSMUST00000190348.2">
    <molecule id="Q01147-1"/>
    <property type="protein sequence ID" value="ENSMUSP00000140112.2"/>
    <property type="gene ID" value="ENSMUSG00000025958.15"/>
</dbReference>
<dbReference type="GeneID" id="12912"/>
<dbReference type="KEGG" id="mmu:12912"/>
<dbReference type="UCSC" id="uc007bgr.1">
    <molecule id="Q01147-2"/>
    <property type="organism name" value="mouse"/>
</dbReference>
<dbReference type="AGR" id="MGI:88494"/>
<dbReference type="CTD" id="1385"/>
<dbReference type="MGI" id="MGI:88494">
    <property type="gene designation" value="Creb1"/>
</dbReference>
<dbReference type="VEuPathDB" id="HostDB:ENSMUSG00000025958"/>
<dbReference type="eggNOG" id="KOG3584">
    <property type="taxonomic scope" value="Eukaryota"/>
</dbReference>
<dbReference type="GeneTree" id="ENSGT00940000155408"/>
<dbReference type="InParanoid" id="Q01147"/>
<dbReference type="OMA" id="TIAQVSM"/>
<dbReference type="OrthoDB" id="5970722at2759"/>
<dbReference type="PhylomeDB" id="Q01147"/>
<dbReference type="TreeFam" id="TF106464"/>
<dbReference type="Reactome" id="R-MMU-198693">
    <property type="pathway name" value="AKT phosphorylates targets in the nucleus"/>
</dbReference>
<dbReference type="Reactome" id="R-MMU-199920">
    <property type="pathway name" value="CREB phosphorylation"/>
</dbReference>
<dbReference type="Reactome" id="R-MMU-375165">
    <property type="pathway name" value="NCAM signaling for neurite out-growth"/>
</dbReference>
<dbReference type="Reactome" id="R-MMU-442742">
    <property type="pathway name" value="CREB1 phosphorylation through NMDA receptor-mediated activation of RAS signaling"/>
</dbReference>
<dbReference type="Reactome" id="R-MMU-881907">
    <property type="pathway name" value="Gastrin-CREB signalling pathway via PKC and MAPK"/>
</dbReference>
<dbReference type="Reactome" id="R-MMU-9031628">
    <property type="pathway name" value="NGF-stimulated transcription"/>
</dbReference>
<dbReference type="Reactome" id="R-MMU-9634638">
    <property type="pathway name" value="Estrogen-dependent nuclear events downstream of ESR-membrane signaling"/>
</dbReference>
<dbReference type="BioGRID-ORCS" id="12912">
    <property type="hits" value="13 hits in 82 CRISPR screens"/>
</dbReference>
<dbReference type="ChiTaRS" id="Creb1">
    <property type="organism name" value="mouse"/>
</dbReference>
<dbReference type="EvolutionaryTrace" id="Q01147"/>
<dbReference type="PRO" id="PR:Q01147"/>
<dbReference type="Proteomes" id="UP000000589">
    <property type="component" value="Chromosome 1"/>
</dbReference>
<dbReference type="RNAct" id="Q01147">
    <property type="molecule type" value="protein"/>
</dbReference>
<dbReference type="Bgee" id="ENSMUSG00000025958">
    <property type="expression patterns" value="Expressed in medial ganglionic eminence and 240 other cell types or tissues"/>
</dbReference>
<dbReference type="ExpressionAtlas" id="Q01147">
    <property type="expression patterns" value="baseline and differential"/>
</dbReference>
<dbReference type="GO" id="GO:1990589">
    <property type="term" value="C:ATF4-CREB1 transcription factor complex"/>
    <property type="evidence" value="ECO:0000314"/>
    <property type="project" value="ParkinsonsUK-UCL"/>
</dbReference>
<dbReference type="GO" id="GO:0030424">
    <property type="term" value="C:axon"/>
    <property type="evidence" value="ECO:0007669"/>
    <property type="project" value="Ensembl"/>
</dbReference>
<dbReference type="GO" id="GO:0005813">
    <property type="term" value="C:centrosome"/>
    <property type="evidence" value="ECO:0007669"/>
    <property type="project" value="Ensembl"/>
</dbReference>
<dbReference type="GO" id="GO:0000785">
    <property type="term" value="C:chromatin"/>
    <property type="evidence" value="ECO:0000314"/>
    <property type="project" value="BHF-UCL"/>
</dbReference>
<dbReference type="GO" id="GO:0036064">
    <property type="term" value="C:ciliary basal body"/>
    <property type="evidence" value="ECO:0007669"/>
    <property type="project" value="Ensembl"/>
</dbReference>
<dbReference type="GO" id="GO:0005829">
    <property type="term" value="C:cytosol"/>
    <property type="evidence" value="ECO:0007669"/>
    <property type="project" value="Ensembl"/>
</dbReference>
<dbReference type="GO" id="GO:0000791">
    <property type="term" value="C:euchromatin"/>
    <property type="evidence" value="ECO:0007669"/>
    <property type="project" value="Ensembl"/>
</dbReference>
<dbReference type="GO" id="GO:0005759">
    <property type="term" value="C:mitochondrial matrix"/>
    <property type="evidence" value="ECO:0007669"/>
    <property type="project" value="Ensembl"/>
</dbReference>
<dbReference type="GO" id="GO:0005654">
    <property type="term" value="C:nucleoplasm"/>
    <property type="evidence" value="ECO:0000304"/>
    <property type="project" value="Reactome"/>
</dbReference>
<dbReference type="GO" id="GO:0005634">
    <property type="term" value="C:nucleus"/>
    <property type="evidence" value="ECO:0000314"/>
    <property type="project" value="UniProtKB"/>
</dbReference>
<dbReference type="GO" id="GO:0090575">
    <property type="term" value="C:RNA polymerase II transcription regulator complex"/>
    <property type="evidence" value="ECO:0000353"/>
    <property type="project" value="ComplexPortal"/>
</dbReference>
<dbReference type="GO" id="GO:0005667">
    <property type="term" value="C:transcription regulator complex"/>
    <property type="evidence" value="ECO:0000314"/>
    <property type="project" value="MGI"/>
</dbReference>
<dbReference type="GO" id="GO:1990763">
    <property type="term" value="F:arrestin family protein binding"/>
    <property type="evidence" value="ECO:0007669"/>
    <property type="project" value="Ensembl"/>
</dbReference>
<dbReference type="GO" id="GO:0035497">
    <property type="term" value="F:cAMP response element binding"/>
    <property type="evidence" value="ECO:0000314"/>
    <property type="project" value="ARUK-UCL"/>
</dbReference>
<dbReference type="GO" id="GO:0003677">
    <property type="term" value="F:DNA binding"/>
    <property type="evidence" value="ECO:0000314"/>
    <property type="project" value="MGI"/>
</dbReference>
<dbReference type="GO" id="GO:0001228">
    <property type="term" value="F:DNA-binding transcription activator activity, RNA polymerase II-specific"/>
    <property type="evidence" value="ECO:0000315"/>
    <property type="project" value="ARUK-UCL"/>
</dbReference>
<dbReference type="GO" id="GO:0003700">
    <property type="term" value="F:DNA-binding transcription factor activity"/>
    <property type="evidence" value="ECO:0000314"/>
    <property type="project" value="MGI"/>
</dbReference>
<dbReference type="GO" id="GO:0035035">
    <property type="term" value="F:histone acetyltransferase binding"/>
    <property type="evidence" value="ECO:0007669"/>
    <property type="project" value="Ensembl"/>
</dbReference>
<dbReference type="GO" id="GO:0030544">
    <property type="term" value="F:Hsp70 protein binding"/>
    <property type="evidence" value="ECO:0007669"/>
    <property type="project" value="Ensembl"/>
</dbReference>
<dbReference type="GO" id="GO:0042802">
    <property type="term" value="F:identical protein binding"/>
    <property type="evidence" value="ECO:0007669"/>
    <property type="project" value="Ensembl"/>
</dbReference>
<dbReference type="GO" id="GO:0000977">
    <property type="term" value="F:RNA polymerase II transcription regulatory region sequence-specific DNA binding"/>
    <property type="evidence" value="ECO:0000314"/>
    <property type="project" value="MGI"/>
</dbReference>
<dbReference type="GO" id="GO:0061629">
    <property type="term" value="F:RNA polymerase II-specific DNA-binding transcription factor binding"/>
    <property type="evidence" value="ECO:0007669"/>
    <property type="project" value="Ensembl"/>
</dbReference>
<dbReference type="GO" id="GO:0043565">
    <property type="term" value="F:sequence-specific DNA binding"/>
    <property type="evidence" value="ECO:0000314"/>
    <property type="project" value="MGI"/>
</dbReference>
<dbReference type="GO" id="GO:0001223">
    <property type="term" value="F:transcription coactivator binding"/>
    <property type="evidence" value="ECO:0007669"/>
    <property type="project" value="Ensembl"/>
</dbReference>
<dbReference type="GO" id="GO:0007409">
    <property type="term" value="P:axonogenesis"/>
    <property type="evidence" value="ECO:0000315"/>
    <property type="project" value="MGI"/>
</dbReference>
<dbReference type="GO" id="GO:0141156">
    <property type="term" value="P:cAMP/PKA signal transduction"/>
    <property type="evidence" value="ECO:0007669"/>
    <property type="project" value="Ensembl"/>
</dbReference>
<dbReference type="GO" id="GO:0071398">
    <property type="term" value="P:cellular response to fatty acid"/>
    <property type="evidence" value="ECO:0007669"/>
    <property type="project" value="Ensembl"/>
</dbReference>
<dbReference type="GO" id="GO:1904322">
    <property type="term" value="P:cellular response to forskolin"/>
    <property type="evidence" value="ECO:0007669"/>
    <property type="project" value="Ensembl"/>
</dbReference>
<dbReference type="GO" id="GO:0071363">
    <property type="term" value="P:cellular response to growth factor stimulus"/>
    <property type="evidence" value="ECO:0000314"/>
    <property type="project" value="BHF-UCL"/>
</dbReference>
<dbReference type="GO" id="GO:0035729">
    <property type="term" value="P:cellular response to hepatocyte growth factor stimulus"/>
    <property type="evidence" value="ECO:0000314"/>
    <property type="project" value="MGI"/>
</dbReference>
<dbReference type="GO" id="GO:1990314">
    <property type="term" value="P:cellular response to insulin-like growth factor stimulus"/>
    <property type="evidence" value="ECO:0007669"/>
    <property type="project" value="Ensembl"/>
</dbReference>
<dbReference type="GO" id="GO:1990830">
    <property type="term" value="P:cellular response to leukemia inhibitory factor"/>
    <property type="evidence" value="ECO:0000270"/>
    <property type="project" value="MGI"/>
</dbReference>
<dbReference type="GO" id="GO:1990090">
    <property type="term" value="P:cellular response to nerve growth factor stimulus"/>
    <property type="evidence" value="ECO:0007669"/>
    <property type="project" value="Ensembl"/>
</dbReference>
<dbReference type="GO" id="GO:0036120">
    <property type="term" value="P:cellular response to platelet-derived growth factor stimulus"/>
    <property type="evidence" value="ECO:0007669"/>
    <property type="project" value="Ensembl"/>
</dbReference>
<dbReference type="GO" id="GO:0071300">
    <property type="term" value="P:cellular response to retinoic acid"/>
    <property type="evidence" value="ECO:0000315"/>
    <property type="project" value="ARUK-UCL"/>
</dbReference>
<dbReference type="GO" id="GO:0071294">
    <property type="term" value="P:cellular response to zinc ion"/>
    <property type="evidence" value="ECO:0000314"/>
    <property type="project" value="MGI"/>
</dbReference>
<dbReference type="GO" id="GO:0034670">
    <property type="term" value="P:chemotaxis to arachidonate"/>
    <property type="evidence" value="ECO:0007669"/>
    <property type="project" value="Ensembl"/>
</dbReference>
<dbReference type="GO" id="GO:0007623">
    <property type="term" value="P:circadian rhythm"/>
    <property type="evidence" value="ECO:0000314"/>
    <property type="project" value="UniProtKB"/>
</dbReference>
<dbReference type="GO" id="GO:0046879">
    <property type="term" value="P:hormone secretion"/>
    <property type="evidence" value="ECO:0000315"/>
    <property type="project" value="MGI"/>
</dbReference>
<dbReference type="GO" id="GO:0140928">
    <property type="term" value="P:inhibition of non-skeletal tissue mineralization"/>
    <property type="evidence" value="ECO:0000266"/>
    <property type="project" value="MGI"/>
</dbReference>
<dbReference type="GO" id="GO:0007595">
    <property type="term" value="P:lactation"/>
    <property type="evidence" value="ECO:0000315"/>
    <property type="project" value="MGI"/>
</dbReference>
<dbReference type="GO" id="GO:0060428">
    <property type="term" value="P:lung epithelium development"/>
    <property type="evidence" value="ECO:0000315"/>
    <property type="project" value="MGI"/>
</dbReference>
<dbReference type="GO" id="GO:0060430">
    <property type="term" value="P:lung saccule development"/>
    <property type="evidence" value="ECO:0000315"/>
    <property type="project" value="MGI"/>
</dbReference>
<dbReference type="GO" id="GO:0030879">
    <property type="term" value="P:mammary gland development"/>
    <property type="evidence" value="ECO:0000315"/>
    <property type="project" value="MGI"/>
</dbReference>
<dbReference type="GO" id="GO:0007613">
    <property type="term" value="P:memory"/>
    <property type="evidence" value="ECO:0000315"/>
    <property type="project" value="MGI"/>
</dbReference>
<dbReference type="GO" id="GO:0042789">
    <property type="term" value="P:mRNA transcription by RNA polymerase II"/>
    <property type="evidence" value="ECO:0007669"/>
    <property type="project" value="Ensembl"/>
</dbReference>
<dbReference type="GO" id="GO:0043066">
    <property type="term" value="P:negative regulation of apoptotic process"/>
    <property type="evidence" value="ECO:0000315"/>
    <property type="project" value="UniProtKB"/>
</dbReference>
<dbReference type="GO" id="GO:0010629">
    <property type="term" value="P:negative regulation of gene expression"/>
    <property type="evidence" value="ECO:0007669"/>
    <property type="project" value="Ensembl"/>
</dbReference>
<dbReference type="GO" id="GO:0010944">
    <property type="term" value="P:negative regulation of transcription by competitive promoter binding"/>
    <property type="evidence" value="ECO:0007669"/>
    <property type="project" value="Ensembl"/>
</dbReference>
<dbReference type="GO" id="GO:0030316">
    <property type="term" value="P:osteoclast differentiation"/>
    <property type="evidence" value="ECO:0000314"/>
    <property type="project" value="MGI"/>
</dbReference>
<dbReference type="GO" id="GO:0021983">
    <property type="term" value="P:pituitary gland development"/>
    <property type="evidence" value="ECO:0000315"/>
    <property type="project" value="MGI"/>
</dbReference>
<dbReference type="GO" id="GO:0043065">
    <property type="term" value="P:positive regulation of apoptotic process"/>
    <property type="evidence" value="ECO:0007669"/>
    <property type="project" value="Ensembl"/>
</dbReference>
<dbReference type="GO" id="GO:0055025">
    <property type="term" value="P:positive regulation of cardiac muscle tissue development"/>
    <property type="evidence" value="ECO:0000315"/>
    <property type="project" value="MGI"/>
</dbReference>
<dbReference type="GO" id="GO:0045893">
    <property type="term" value="P:positive regulation of DNA-templated transcription"/>
    <property type="evidence" value="ECO:0000316"/>
    <property type="project" value="UniProtKB"/>
</dbReference>
<dbReference type="GO" id="GO:0045600">
    <property type="term" value="P:positive regulation of fat cell differentiation"/>
    <property type="evidence" value="ECO:0000316"/>
    <property type="project" value="UniProtKB"/>
</dbReference>
<dbReference type="GO" id="GO:0046887">
    <property type="term" value="P:positive regulation of hormone secretion"/>
    <property type="evidence" value="ECO:0000315"/>
    <property type="project" value="MGI"/>
</dbReference>
<dbReference type="GO" id="GO:0046889">
    <property type="term" value="P:positive regulation of lipid biosynthetic process"/>
    <property type="evidence" value="ECO:0000316"/>
    <property type="project" value="UniProtKB"/>
</dbReference>
<dbReference type="GO" id="GO:1900273">
    <property type="term" value="P:positive regulation of long-term synaptic potentiation"/>
    <property type="evidence" value="ECO:0007669"/>
    <property type="project" value="Ensembl"/>
</dbReference>
<dbReference type="GO" id="GO:1904181">
    <property type="term" value="P:positive regulation of membrane depolarization"/>
    <property type="evidence" value="ECO:0007669"/>
    <property type="project" value="Ensembl"/>
</dbReference>
<dbReference type="GO" id="GO:0040018">
    <property type="term" value="P:positive regulation of multicellular organism growth"/>
    <property type="evidence" value="ECO:0000315"/>
    <property type="project" value="MGI"/>
</dbReference>
<dbReference type="GO" id="GO:0045672">
    <property type="term" value="P:positive regulation of osteoclast differentiation"/>
    <property type="evidence" value="ECO:0000314"/>
    <property type="project" value="MGI"/>
</dbReference>
<dbReference type="GO" id="GO:0045899">
    <property type="term" value="P:positive regulation of RNA polymerase II transcription preinitiation complex assembly"/>
    <property type="evidence" value="ECO:0007669"/>
    <property type="project" value="Ensembl"/>
</dbReference>
<dbReference type="GO" id="GO:0045944">
    <property type="term" value="P:positive regulation of transcription by RNA polymerase II"/>
    <property type="evidence" value="ECO:0000314"/>
    <property type="project" value="UniProtKB"/>
</dbReference>
<dbReference type="GO" id="GO:0032916">
    <property type="term" value="P:positive regulation of transforming growth factor beta3 production"/>
    <property type="evidence" value="ECO:0007669"/>
    <property type="project" value="Ensembl"/>
</dbReference>
<dbReference type="GO" id="GO:0050821">
    <property type="term" value="P:protein stabilization"/>
    <property type="evidence" value="ECO:0000315"/>
    <property type="project" value="UniProtKB"/>
</dbReference>
<dbReference type="GO" id="GO:0008361">
    <property type="term" value="P:regulation of cell size"/>
    <property type="evidence" value="ECO:0000316"/>
    <property type="project" value="MGI"/>
</dbReference>
<dbReference type="GO" id="GO:0006355">
    <property type="term" value="P:regulation of DNA-templated transcription"/>
    <property type="evidence" value="ECO:0000314"/>
    <property type="project" value="MGI"/>
</dbReference>
<dbReference type="GO" id="GO:0048145">
    <property type="term" value="P:regulation of fibroblast proliferation"/>
    <property type="evidence" value="ECO:0007669"/>
    <property type="project" value="Ensembl"/>
</dbReference>
<dbReference type="GO" id="GO:0060251">
    <property type="term" value="P:regulation of glial cell proliferation"/>
    <property type="evidence" value="ECO:0007669"/>
    <property type="project" value="Ensembl"/>
</dbReference>
<dbReference type="GO" id="GO:2000224">
    <property type="term" value="P:regulation of testosterone biosynthetic process"/>
    <property type="evidence" value="ECO:0000314"/>
    <property type="project" value="UniProt"/>
</dbReference>
<dbReference type="GO" id="GO:0006357">
    <property type="term" value="P:regulation of transcription by RNA polymerase II"/>
    <property type="evidence" value="ECO:0000314"/>
    <property type="project" value="ComplexPortal"/>
</dbReference>
<dbReference type="GO" id="GO:0014823">
    <property type="term" value="P:response to activity"/>
    <property type="evidence" value="ECO:0007669"/>
    <property type="project" value="Ensembl"/>
</dbReference>
<dbReference type="GO" id="GO:0042220">
    <property type="term" value="P:response to cocaine"/>
    <property type="evidence" value="ECO:0007669"/>
    <property type="project" value="Ensembl"/>
</dbReference>
<dbReference type="GO" id="GO:1903494">
    <property type="term" value="P:response to dehydroepiandrosterone"/>
    <property type="evidence" value="ECO:0007669"/>
    <property type="project" value="Ensembl"/>
</dbReference>
<dbReference type="GO" id="GO:0036017">
    <property type="term" value="P:response to erythropoietin"/>
    <property type="evidence" value="ECO:0007669"/>
    <property type="project" value="Ensembl"/>
</dbReference>
<dbReference type="GO" id="GO:0045471">
    <property type="term" value="P:response to ethanol"/>
    <property type="evidence" value="ECO:0007669"/>
    <property type="project" value="Ensembl"/>
</dbReference>
<dbReference type="GO" id="GO:0033762">
    <property type="term" value="P:response to glucagon"/>
    <property type="evidence" value="ECO:0000315"/>
    <property type="project" value="UniProtKB"/>
</dbReference>
<dbReference type="GO" id="GO:1990910">
    <property type="term" value="P:response to hypobaric hypoxia"/>
    <property type="evidence" value="ECO:0007669"/>
    <property type="project" value="Ensembl"/>
</dbReference>
<dbReference type="GO" id="GO:1902065">
    <property type="term" value="P:response to L-glutamate"/>
    <property type="evidence" value="ECO:0007669"/>
    <property type="project" value="Ensembl"/>
</dbReference>
<dbReference type="GO" id="GO:0043278">
    <property type="term" value="P:response to morphine"/>
    <property type="evidence" value="ECO:0007669"/>
    <property type="project" value="Ensembl"/>
</dbReference>
<dbReference type="GO" id="GO:0035094">
    <property type="term" value="P:response to nicotine"/>
    <property type="evidence" value="ECO:0007669"/>
    <property type="project" value="Ensembl"/>
</dbReference>
<dbReference type="GO" id="GO:0014074">
    <property type="term" value="P:response to purine-containing compound"/>
    <property type="evidence" value="ECO:0007669"/>
    <property type="project" value="Ensembl"/>
</dbReference>
<dbReference type="GO" id="GO:0009410">
    <property type="term" value="P:response to xenobiotic stimulus"/>
    <property type="evidence" value="ECO:0000314"/>
    <property type="project" value="MGI"/>
</dbReference>
<dbReference type="GO" id="GO:0033363">
    <property type="term" value="P:secretory granule organization"/>
    <property type="evidence" value="ECO:0000315"/>
    <property type="project" value="MGI"/>
</dbReference>
<dbReference type="GO" id="GO:0007179">
    <property type="term" value="P:transforming growth factor beta receptor signaling pathway"/>
    <property type="evidence" value="ECO:0007669"/>
    <property type="project" value="Ensembl"/>
</dbReference>
<dbReference type="GO" id="GO:0060509">
    <property type="term" value="P:type I pneumocyte differentiation"/>
    <property type="evidence" value="ECO:0000315"/>
    <property type="project" value="MGI"/>
</dbReference>
<dbReference type="GO" id="GO:0008542">
    <property type="term" value="P:visual learning"/>
    <property type="evidence" value="ECO:0007669"/>
    <property type="project" value="Ensembl"/>
</dbReference>
<dbReference type="CDD" id="cd14690">
    <property type="entry name" value="bZIP_CREB1"/>
    <property type="match status" value="1"/>
</dbReference>
<dbReference type="FunFam" id="1.20.5.170:FF:000003">
    <property type="entry name" value="cAMP-responsive element modulator isoform X2"/>
    <property type="match status" value="1"/>
</dbReference>
<dbReference type="Gene3D" id="1.20.5.170">
    <property type="match status" value="1"/>
</dbReference>
<dbReference type="InterPro" id="IPR004827">
    <property type="entry name" value="bZIP"/>
</dbReference>
<dbReference type="InterPro" id="IPR046347">
    <property type="entry name" value="bZIP_sf"/>
</dbReference>
<dbReference type="InterPro" id="IPR003102">
    <property type="entry name" value="CREB1-like_pKID"/>
</dbReference>
<dbReference type="InterPro" id="IPR001630">
    <property type="entry name" value="Leuzip_CREB"/>
</dbReference>
<dbReference type="PANTHER" id="PTHR45879">
    <property type="entry name" value="CYCLIC AMP RESPONSE ELEMENT-BINDING PROTEIN B"/>
    <property type="match status" value="1"/>
</dbReference>
<dbReference type="PANTHER" id="PTHR45879:SF1">
    <property type="entry name" value="CYCLIC AMP-RESPONSIVE ELEMENT-BINDING PROTEIN 1"/>
    <property type="match status" value="1"/>
</dbReference>
<dbReference type="Pfam" id="PF00170">
    <property type="entry name" value="bZIP_1"/>
    <property type="match status" value="1"/>
</dbReference>
<dbReference type="Pfam" id="PF02173">
    <property type="entry name" value="pKID"/>
    <property type="match status" value="1"/>
</dbReference>
<dbReference type="PRINTS" id="PR00041">
    <property type="entry name" value="LEUZIPPRCREB"/>
</dbReference>
<dbReference type="SMART" id="SM00338">
    <property type="entry name" value="BRLZ"/>
    <property type="match status" value="1"/>
</dbReference>
<dbReference type="SUPFAM" id="SSF57959">
    <property type="entry name" value="Leucine zipper domain"/>
    <property type="match status" value="1"/>
</dbReference>
<dbReference type="PROSITE" id="PS50217">
    <property type="entry name" value="BZIP"/>
    <property type="match status" value="1"/>
</dbReference>
<dbReference type="PROSITE" id="PS00036">
    <property type="entry name" value="BZIP_BASIC"/>
    <property type="match status" value="1"/>
</dbReference>
<dbReference type="PROSITE" id="PS50953">
    <property type="entry name" value="KID"/>
    <property type="match status" value="1"/>
</dbReference>
<accession>Q01147</accession>
<sequence>MTMESGADNQQSGDAAVTEAENQQMTVQAQPQIATLAQVSMPAAHATSSAPTVTLVQLPNGQTVQVHGVIQAAQPSVIQSPQVQTVQISTIAESEDSQESVDSVTDSQKRREILSRRPSYRKILNDLSSDAPGVPRIEEEKSEEETSAPAITTVTVPTPIYQTSSGQYIAITQGGAIQLANNGTDGVQGLQTLTMTNAAATQPGTTILQYAQTTDGQQILVPSNQVVVQAASGDVQTYQIRTAPTSTIAPGVVMASSPALPTQPAEEAARKREVRLMKNREAARECRRKKKEYVKCLENRVAVLENQNKTLIEELKALKDLYCHKSD</sequence>
<name>CREB1_MOUSE</name>
<organism>
    <name type="scientific">Mus musculus</name>
    <name type="common">Mouse</name>
    <dbReference type="NCBI Taxonomy" id="10090"/>
    <lineage>
        <taxon>Eukaryota</taxon>
        <taxon>Metazoa</taxon>
        <taxon>Chordata</taxon>
        <taxon>Craniata</taxon>
        <taxon>Vertebrata</taxon>
        <taxon>Euteleostomi</taxon>
        <taxon>Mammalia</taxon>
        <taxon>Eutheria</taxon>
        <taxon>Euarchontoglires</taxon>
        <taxon>Glires</taxon>
        <taxon>Rodentia</taxon>
        <taxon>Myomorpha</taxon>
        <taxon>Muroidea</taxon>
        <taxon>Muridae</taxon>
        <taxon>Murinae</taxon>
        <taxon>Mus</taxon>
        <taxon>Mus</taxon>
    </lineage>
</organism>
<evidence type="ECO:0000250" key="1"/>
<evidence type="ECO:0000250" key="2">
    <source>
        <dbReference type="UniProtKB" id="P15337"/>
    </source>
</evidence>
<evidence type="ECO:0000250" key="3">
    <source>
        <dbReference type="UniProtKB" id="P16220"/>
    </source>
</evidence>
<evidence type="ECO:0000250" key="4">
    <source>
        <dbReference type="UniProtKB" id="P27925"/>
    </source>
</evidence>
<evidence type="ECO:0000255" key="5">
    <source>
        <dbReference type="PROSITE-ProRule" id="PRU00312"/>
    </source>
</evidence>
<evidence type="ECO:0000255" key="6">
    <source>
        <dbReference type="PROSITE-ProRule" id="PRU00978"/>
    </source>
</evidence>
<evidence type="ECO:0000256" key="7">
    <source>
        <dbReference type="SAM" id="MobiDB-lite"/>
    </source>
</evidence>
<evidence type="ECO:0000269" key="8">
    <source>
    </source>
</evidence>
<evidence type="ECO:0000269" key="9">
    <source>
    </source>
</evidence>
<evidence type="ECO:0000269" key="10">
    <source>
    </source>
</evidence>
<evidence type="ECO:0000269" key="11">
    <source>
    </source>
</evidence>
<evidence type="ECO:0000269" key="12">
    <source>
    </source>
</evidence>
<evidence type="ECO:0000269" key="13">
    <source>
    </source>
</evidence>
<evidence type="ECO:0000269" key="14">
    <source>
    </source>
</evidence>
<evidence type="ECO:0000269" key="15">
    <source>
    </source>
</evidence>
<evidence type="ECO:0000269" key="16">
    <source>
    </source>
</evidence>
<evidence type="ECO:0000303" key="17">
    <source>
    </source>
</evidence>
<evidence type="ECO:0000305" key="18"/>
<evidence type="ECO:0007829" key="19">
    <source>
        <dbReference type="PDB" id="1DH3"/>
    </source>
</evidence>
<reference key="1">
    <citation type="journal article" date="1992" name="EMBO J.">
        <title>Multiple mRNA isoforms of the transcription activator protein CREB: generation by alternative splicing and specific expression in primary spermatocytes.</title>
        <authorList>
            <person name="Ruppert S."/>
            <person name="Cole T.J."/>
            <person name="Boshart M."/>
            <person name="Schmid E."/>
            <person name="Schuetz G."/>
        </authorList>
    </citation>
    <scope>NUCLEOTIDE SEQUENCE [GENOMIC DNA / MRNA] (ISOFORMS 1 AND 2)</scope>
</reference>
<reference key="2">
    <citation type="journal article" date="1992" name="Genomics">
        <title>The mouse CREB (cAMP responsive element binding protein) gene: structure, promoter analysis, and chromosomal localization.</title>
        <authorList>
            <person name="Cole T.J."/>
            <person name="Copeland N.G."/>
            <person name="Gilbert D.J."/>
            <person name="Jenkins N.A."/>
            <person name="Schuetz G."/>
            <person name="Ruppert R."/>
        </authorList>
    </citation>
    <scope>NUCLEOTIDE SEQUENCE [GENOMIC DNA]</scope>
</reference>
<reference key="3">
    <citation type="journal article" date="1996" name="Mol. Cell. Biol.">
        <title>Phosphorylation of CREB at Ser-133 induces complex formation with CREB-binding protein via a direct mechanism.</title>
        <authorList>
            <person name="Parker D."/>
            <person name="Ferreri K."/>
            <person name="Nakajima T."/>
            <person name="LaMorte V.J."/>
            <person name="Evans R."/>
            <person name="Koerber S.C."/>
            <person name="Hoeger C."/>
            <person name="Montminy M.R."/>
        </authorList>
    </citation>
    <scope>INTERACTION WITH CREBBP</scope>
    <scope>PHOSPHORYLATION AT SER-119</scope>
    <scope>MUTAGENESIS OF 123-ILE-LEU-124</scope>
</reference>
<reference key="4">
    <citation type="journal article" date="2002" name="Neuron">
        <title>Phosphorylation of CREB Ser142 regulates light-induced phase shifts of the circadian clock.</title>
        <authorList>
            <person name="Gau D."/>
            <person name="Lemberger T."/>
            <person name="von Gall C."/>
            <person name="Kretz O."/>
            <person name="Le Minh N."/>
            <person name="Gass P."/>
            <person name="Schmid W."/>
            <person name="Schibler U."/>
            <person name="Korf H.W."/>
            <person name="Schuetz G."/>
        </authorList>
    </citation>
    <scope>PHOSPHORYLATION AT SER-119 AND SER-128</scope>
    <scope>MUTAGENESIS OF SER-128</scope>
    <scope>FUNCTION</scope>
</reference>
<reference key="5">
    <citation type="journal article" date="2008" name="Nat. Immunol.">
        <title>The kinases MSK1 and MSK2 act as negative regulators of Toll-like receptor signaling.</title>
        <authorList>
            <person name="Ananieva O."/>
            <person name="Darragh J."/>
            <person name="Johansen C."/>
            <person name="Carr J.M."/>
            <person name="McIlrath J."/>
            <person name="Park J.M."/>
            <person name="Wingate A."/>
            <person name="Monk C.E."/>
            <person name="Toth R."/>
            <person name="Santos S.G."/>
            <person name="Iversen L."/>
            <person name="Arthur J.S."/>
        </authorList>
    </citation>
    <scope>PHOSPHORYLATION AT SER-119</scope>
    <scope>MUTAGENESIS OF SER-119</scope>
</reference>
<reference key="6">
    <citation type="journal article" date="2010" name="Cell">
        <title>A tissue-specific atlas of mouse protein phosphorylation and expression.</title>
        <authorList>
            <person name="Huttlin E.L."/>
            <person name="Jedrychowski M.P."/>
            <person name="Elias J.E."/>
            <person name="Goswami T."/>
            <person name="Rad R."/>
            <person name="Beausoleil S.A."/>
            <person name="Villen J."/>
            <person name="Haas W."/>
            <person name="Sowa M.E."/>
            <person name="Gygi S.P."/>
        </authorList>
    </citation>
    <scope>IDENTIFICATION BY MASS SPECTROMETRY [LARGE SCALE ANALYSIS]</scope>
    <source>
        <tissue>Spleen</tissue>
    </source>
</reference>
<reference key="7">
    <citation type="journal article" date="2010" name="Nat. Med.">
        <title>Cryptochrome mediates circadian regulation of cAMP signaling and hepatic gluconeogenesis.</title>
        <authorList>
            <person name="Zhang E.E."/>
            <person name="Liu Y."/>
            <person name="Dentin R."/>
            <person name="Pongsawakul P.Y."/>
            <person name="Liu A.C."/>
            <person name="Hirota T."/>
            <person name="Nusinow D.A."/>
            <person name="Sun X."/>
            <person name="Landais S."/>
            <person name="Kodama Y."/>
            <person name="Brenner D.A."/>
            <person name="Montminy M."/>
            <person name="Kay S.A."/>
        </authorList>
    </citation>
    <scope>PHOSPHORYLATION</scope>
</reference>
<reference key="8">
    <citation type="journal article" date="2011" name="Biochem. J.">
        <title>CREBL2, interacting with CREB, induces adipogenesis in 3T3-L1 adipocytes.</title>
        <authorList>
            <person name="Ma X."/>
            <person name="Zhang H."/>
            <person name="Yuan L."/>
            <person name="Jing H."/>
            <person name="Thacker P."/>
            <person name="Li D."/>
        </authorList>
    </citation>
    <scope>FUNCTION IN ADIPOCYTE DIFFERENTIATION</scope>
    <scope>INTERACTION WITH CREBL2</scope>
    <scope>SUBCELLULAR LOCATION</scope>
</reference>
<reference key="9">
    <citation type="journal article" date="2018" name="Circ. Res.">
        <title>Myonectin Is an Exercise-Induced Myokine That Protects the Heart From Ischemia-Reperfusion Injury.</title>
        <authorList>
            <person name="Otaka N."/>
            <person name="Shibata R."/>
            <person name="Ohashi K."/>
            <person name="Uemura Y."/>
            <person name="Kambara T."/>
            <person name="Enomoto T."/>
            <person name="Ogawa H."/>
            <person name="Ito M."/>
            <person name="Kawanishi H."/>
            <person name="Maruyama S."/>
            <person name="Joki Y."/>
            <person name="Fujikawa Y."/>
            <person name="Narita S."/>
            <person name="Unno K."/>
            <person name="Kawamoto Y."/>
            <person name="Murate T."/>
            <person name="Murohara T."/>
            <person name="Ouchi N."/>
        </authorList>
    </citation>
    <scope>FUNCTION</scope>
    <scope>TISSUE SPECIFICITY</scope>
</reference>
<reference key="10">
    <citation type="journal article" date="2022" name="Cell Metab.">
        <title>TOX4, an insulin receptor-independent regulator of hepatic glucose production, is activated in diabetic liver.</title>
        <authorList>
            <person name="Wang L."/>
            <person name="Yu J."/>
            <person name="Zhou Q."/>
            <person name="Wang X."/>
            <person name="Mukhanova M."/>
            <person name="Du W."/>
            <person name="Sun L."/>
            <person name="Pajvani U.B."/>
            <person name="Accili D."/>
        </authorList>
    </citation>
    <scope>INTERACTION WITH TOX4</scope>
</reference>
<reference key="11">
    <citation type="journal article" date="2000" name="J. Biol. Chem.">
        <title>The structure of a CREB bZIP.somatostatin CRE complex reveals the basis for selective dimerization and divalent cation-enhanced DNA binding.</title>
        <authorList>
            <person name="Schumacher M.A."/>
            <person name="Goodman R.H."/>
            <person name="Brennan R.G."/>
        </authorList>
    </citation>
    <scope>X-RAY CRYSTALLOGRAPHY (3.0 ANGSTROMS) IN COMPLEX WITH THE SOMATOSTATIN CAMP RESPONSE ELEMENT (SSCRE)</scope>
</reference>
<comment type="function">
    <text evidence="3 4 9 13 14">Phosphorylation-dependent transcription factor that stimulates transcription upon binding to the DNA cAMP response element (CRE), a sequence present in many viral and cellular promoters (By similarity). Transcription activation is enhanced by the TORC coactivators which act independently of Ser-119 phosphorylation (By similarity). Involved in different cellular processes including the synchronization of circadian rhythmicity and the differentiation of adipose cells (PubMed:11970866, PubMed:21728997). Regulates the expression of apoptotic and inflammatory response factors in cardiomyocytes in response to ERFE-mediated activation of AKT signaling (PubMed:30566056).</text>
</comment>
<comment type="subunit">
    <text evidence="3 8 13 15 16">Interacts with PPRC1. Binds DNA as a dimer. This dimer is stabilized by magnesium ions. Interacts, through the bZIP domain, with the coactivators CRTC1/TORC1, CRTC2/TORC2 and CRTC3/TORC3. Interacts (phosphorylated form) with TOX3 (By similarity). When phosphorylated on Ser-119, binds CREBBP. Interacts with ARRB1. Binds to HIPK2 (By similarity). Interacts with SGK1 (By similarity). Interacts with CREBL2; regulates CREB1 phosphorylation, stability and transcriptional activity. Interacts with TSSK4; this interaction facilitates phosphorylation on Ser-119 (By similarity). Forms a complex with KMT2A and CREBBP (By similarity). Interacts with TOX4; CREB1 is required for full induction of TOX4-dependent activity and the interaction is increased by cAMP and inhibited by insulin (PubMed:34914893).</text>
</comment>
<comment type="interaction">
    <interactant intactId="EBI-2291098">
        <id>Q01147</id>
    </interactant>
    <interactant intactId="EBI-5314489">
        <id>Q32M00</id>
        <label>Crebl2</label>
    </interactant>
    <organismsDiffer>false</organismsDiffer>
    <experiments>4</experiments>
</comment>
<comment type="interaction">
    <interactant intactId="EBI-2291098">
        <id>Q01147</id>
    </interactant>
    <interactant intactId="EBI-349004">
        <id>Q60974</id>
        <label>Ncor1</label>
    </interactant>
    <organismsDiffer>false</organismsDiffer>
    <experiments>4</experiments>
</comment>
<comment type="subcellular location">
    <subcellularLocation>
        <location evidence="5 6 13">Nucleus</location>
    </subcellularLocation>
</comment>
<comment type="alternative products">
    <event type="alternative splicing"/>
    <isoform>
        <id>Q01147-2</id>
        <name>1</name>
        <name evidence="17">Delta</name>
        <sequence type="displayed"/>
    </isoform>
    <isoform>
        <id>Q01147-1</id>
        <name>2</name>
        <name evidence="17">Alpha</name>
        <sequence type="described" ref="VSP_060704"/>
    </isoform>
    <text evidence="10">At least 6 isoforms may be produced.</text>
</comment>
<comment type="tissue specificity">
    <text evidence="14">Expressed in the heart (at protein level).</text>
</comment>
<comment type="PTM">
    <text evidence="3 9 11 12 16">Phosphorylation of Ser-119 allows CREBBP binding. Stimulated by phosphorylation. Phosphorylated Ser-128 can be detected in the suprachiasmatic nucleus (SCN), the amygdala, the cortex, and the hippocampus but not in the striatum nor in the cerebellum. In the SCN, phosphorylation of Ser-128 and Ser-119 are stimulated by light exposure and submitted to circadian oscillations. In the retina, only phosphorylation of Ser-119 can be detected upon light exposure. Phosphorylation of both Ser-119 and Ser-128 in the SCN regulates the activity of CREB and participates in circadian rhythm generation. Phosphorylated upon calcium influx by CaMK4 and CaMK2 on Ser-119. CaMK4 is much more potent than CAMK2 in activating CREB. Phosphorylated by CaMK2 on Ser-128. Phosphorylation of Ser-128 blocks CREB-mediated transcription even when Ser-119 is phosphorylated. Phosphorylated by CaMK1. Phosphorylation of Ser-271 by HIPK2 in response to genotoxic stress promotes CREB1 activity, facilitating the recruitment of the coactivator CBP (By similarity). Phosphorylated at Ser-119 by RPS6KA3, RPS6KA4 and RPS6KA5 in response to mitogenic or stress stimuli. CREBL2 positively regulates phosphorylation at Ser-119 thereby stimulating CREB1 transcriptional activity. In liver, phosphorylation is induced by fasting or glucagon in a circadian fashion. Phosphorylated by TSSK4 on Ser-119 (By similarity).</text>
</comment>
<comment type="PTM">
    <text evidence="1">Sumoylated with SUMO1. Sumoylation on Lys-290, but not on Lys-271, is required for nuclear localization of this protein. Sumoylation is enhanced under hypoxia, promoting nuclear localization and stabilization (By similarity).</text>
</comment>
<comment type="similarity">
    <text evidence="18">Belongs to the bZIP family.</text>
</comment>
<keyword id="KW-0002">3D-structure</keyword>
<keyword id="KW-0010">Activator</keyword>
<keyword id="KW-0025">Alternative splicing</keyword>
<keyword id="KW-0090">Biological rhythms</keyword>
<keyword id="KW-0221">Differentiation</keyword>
<keyword id="KW-0238">DNA-binding</keyword>
<keyword id="KW-1017">Isopeptide bond</keyword>
<keyword id="KW-0539">Nucleus</keyword>
<keyword id="KW-0597">Phosphoprotein</keyword>
<keyword id="KW-1185">Reference proteome</keyword>
<keyword id="KW-0804">Transcription</keyword>
<keyword id="KW-0805">Transcription regulation</keyword>
<keyword id="KW-0832">Ubl conjugation</keyword>
<protein>
    <recommendedName>
        <fullName>Cyclic AMP-responsive element-binding protein 1</fullName>
        <shortName>CREB-1</shortName>
        <shortName>cAMP-responsive element-binding protein 1</shortName>
    </recommendedName>
</protein>
<feature type="chain" id="PRO_0000076598" description="Cyclic AMP-responsive element-binding protein 1">
    <location>
        <begin position="1"/>
        <end position="327"/>
    </location>
</feature>
<feature type="domain" description="KID" evidence="5">
    <location>
        <begin position="87"/>
        <end position="146"/>
    </location>
</feature>
<feature type="domain" description="bZIP" evidence="6">
    <location>
        <begin position="269"/>
        <end position="327"/>
    </location>
</feature>
<feature type="region of interest" description="Disordered" evidence="7">
    <location>
        <begin position="1"/>
        <end position="27"/>
    </location>
</feature>
<feature type="region of interest" description="Disordered" evidence="7">
    <location>
        <begin position="94"/>
        <end position="113"/>
    </location>
</feature>
<feature type="region of interest" description="Disordered" evidence="7">
    <location>
        <begin position="126"/>
        <end position="151"/>
    </location>
</feature>
<feature type="region of interest" description="Basic motif" evidence="6">
    <location>
        <begin position="270"/>
        <end position="295"/>
    </location>
</feature>
<feature type="region of interest" description="Leucine-zipper" evidence="6">
    <location>
        <begin position="297"/>
        <end position="318"/>
    </location>
</feature>
<feature type="site" description="Required for binding TORCs" evidence="1">
    <location>
        <position position="300"/>
    </location>
</feature>
<feature type="modified residue" description="Phosphoserine; by CaMK1, CaMK2, CaMK4, PKB/AKT1 or PKB/AKT2, RPS6KA3, RPS6KA4, RPS6KA5 and SGK1" evidence="5 9 11 16">
    <location>
        <position position="119"/>
    </location>
</feature>
<feature type="modified residue" description="Phosphoserine; by CaMK2" evidence="2 5">
    <location>
        <position position="128"/>
    </location>
</feature>
<feature type="modified residue" description="Phosphoserine; by HIPK2" evidence="3 5">
    <location>
        <position position="257"/>
    </location>
</feature>
<feature type="cross-link" description="Glycyl lysine isopeptide (Lys-Gly) (interchain with G-Cter in SUMO2)" evidence="3">
    <location>
        <position position="122"/>
    </location>
</feature>
<feature type="cross-link" description="Glycyl lysine isopeptide (Lys-Gly) (interchain with G-Cter in SUMO1)" evidence="3">
    <location>
        <position position="271"/>
    </location>
</feature>
<feature type="cross-link" description="Glycyl lysine isopeptide (Lys-Gly) (interchain with G-Cter in SUMO1)" evidence="3">
    <location>
        <position position="290"/>
    </location>
</feature>
<feature type="splice variant" id="VSP_060704" description="In isoform 2." evidence="18">
    <original>V</original>
    <variation>VQSSCKDLKRLFSGT</variation>
    <location>
        <position position="86"/>
    </location>
</feature>
<feature type="mutagenesis site" description="Loss of phosphorylation by RPS6KA4 and RPS6KA5." evidence="11">
    <original>S</original>
    <variation>A</variation>
    <location>
        <position position="119"/>
    </location>
</feature>
<feature type="mutagenesis site" description="Abolishes CREBBP binding." evidence="16">
    <original>IL</original>
    <variation>AA</variation>
    <location>
        <begin position="123"/>
        <end position="124"/>
    </location>
</feature>
<feature type="mutagenesis site" description="Attenuates light-induced phase shifts of locomotion and expression of c-Fos and mPer1 in the SCN." evidence="9">
    <original>S</original>
    <variation>A</variation>
    <location>
        <position position="128"/>
    </location>
</feature>
<feature type="helix" evidence="19">
    <location>
        <begin position="272"/>
        <end position="319"/>
    </location>
</feature>